<name>COG8_DROME</name>
<comment type="function">
    <text evidence="1">Required for normal Golgi function.</text>
</comment>
<comment type="subunit">
    <text evidence="1">Component of the conserved oligomeric Golgi complex which is composed of eight different subunits and is required for normal Golgi morphology and localization.</text>
</comment>
<comment type="subcellular location">
    <subcellularLocation>
        <location evidence="1">Golgi apparatus membrane</location>
        <topology evidence="1">Peripheral membrane protein</topology>
    </subcellularLocation>
</comment>
<comment type="similarity">
    <text evidence="2">Belongs to the COG8 family.</text>
</comment>
<comment type="sequence caution" evidence="2">
    <conflict type="miscellaneous discrepancy">
        <sequence resource="EMBL-CDS" id="AAL39970"/>
    </conflict>
    <text>Intron retention.</text>
</comment>
<organism>
    <name type="scientific">Drosophila melanogaster</name>
    <name type="common">Fruit fly</name>
    <dbReference type="NCBI Taxonomy" id="7227"/>
    <lineage>
        <taxon>Eukaryota</taxon>
        <taxon>Metazoa</taxon>
        <taxon>Ecdysozoa</taxon>
        <taxon>Arthropoda</taxon>
        <taxon>Hexapoda</taxon>
        <taxon>Insecta</taxon>
        <taxon>Pterygota</taxon>
        <taxon>Neoptera</taxon>
        <taxon>Endopterygota</taxon>
        <taxon>Diptera</taxon>
        <taxon>Brachycera</taxon>
        <taxon>Muscomorpha</taxon>
        <taxon>Ephydroidea</taxon>
        <taxon>Drosophilidae</taxon>
        <taxon>Drosophila</taxon>
        <taxon>Sophophora</taxon>
    </lineage>
</organism>
<reference key="1">
    <citation type="journal article" date="2000" name="Science">
        <title>The genome sequence of Drosophila melanogaster.</title>
        <authorList>
            <person name="Adams M.D."/>
            <person name="Celniker S.E."/>
            <person name="Holt R.A."/>
            <person name="Evans C.A."/>
            <person name="Gocayne J.D."/>
            <person name="Amanatides P.G."/>
            <person name="Scherer S.E."/>
            <person name="Li P.W."/>
            <person name="Hoskins R.A."/>
            <person name="Galle R.F."/>
            <person name="George R.A."/>
            <person name="Lewis S.E."/>
            <person name="Richards S."/>
            <person name="Ashburner M."/>
            <person name="Henderson S.N."/>
            <person name="Sutton G.G."/>
            <person name="Wortman J.R."/>
            <person name="Yandell M.D."/>
            <person name="Zhang Q."/>
            <person name="Chen L.X."/>
            <person name="Brandon R.C."/>
            <person name="Rogers Y.-H.C."/>
            <person name="Blazej R.G."/>
            <person name="Champe M."/>
            <person name="Pfeiffer B.D."/>
            <person name="Wan K.H."/>
            <person name="Doyle C."/>
            <person name="Baxter E.G."/>
            <person name="Helt G."/>
            <person name="Nelson C.R."/>
            <person name="Miklos G.L.G."/>
            <person name="Abril J.F."/>
            <person name="Agbayani A."/>
            <person name="An H.-J."/>
            <person name="Andrews-Pfannkoch C."/>
            <person name="Baldwin D."/>
            <person name="Ballew R.M."/>
            <person name="Basu A."/>
            <person name="Baxendale J."/>
            <person name="Bayraktaroglu L."/>
            <person name="Beasley E.M."/>
            <person name="Beeson K.Y."/>
            <person name="Benos P.V."/>
            <person name="Berman B.P."/>
            <person name="Bhandari D."/>
            <person name="Bolshakov S."/>
            <person name="Borkova D."/>
            <person name="Botchan M.R."/>
            <person name="Bouck J."/>
            <person name="Brokstein P."/>
            <person name="Brottier P."/>
            <person name="Burtis K.C."/>
            <person name="Busam D.A."/>
            <person name="Butler H."/>
            <person name="Cadieu E."/>
            <person name="Center A."/>
            <person name="Chandra I."/>
            <person name="Cherry J.M."/>
            <person name="Cawley S."/>
            <person name="Dahlke C."/>
            <person name="Davenport L.B."/>
            <person name="Davies P."/>
            <person name="de Pablos B."/>
            <person name="Delcher A."/>
            <person name="Deng Z."/>
            <person name="Mays A.D."/>
            <person name="Dew I."/>
            <person name="Dietz S.M."/>
            <person name="Dodson K."/>
            <person name="Doup L.E."/>
            <person name="Downes M."/>
            <person name="Dugan-Rocha S."/>
            <person name="Dunkov B.C."/>
            <person name="Dunn P."/>
            <person name="Durbin K.J."/>
            <person name="Evangelista C.C."/>
            <person name="Ferraz C."/>
            <person name="Ferriera S."/>
            <person name="Fleischmann W."/>
            <person name="Fosler C."/>
            <person name="Gabrielian A.E."/>
            <person name="Garg N.S."/>
            <person name="Gelbart W.M."/>
            <person name="Glasser K."/>
            <person name="Glodek A."/>
            <person name="Gong F."/>
            <person name="Gorrell J.H."/>
            <person name="Gu Z."/>
            <person name="Guan P."/>
            <person name="Harris M."/>
            <person name="Harris N.L."/>
            <person name="Harvey D.A."/>
            <person name="Heiman T.J."/>
            <person name="Hernandez J.R."/>
            <person name="Houck J."/>
            <person name="Hostin D."/>
            <person name="Houston K.A."/>
            <person name="Howland T.J."/>
            <person name="Wei M.-H."/>
            <person name="Ibegwam C."/>
            <person name="Jalali M."/>
            <person name="Kalush F."/>
            <person name="Karpen G.H."/>
            <person name="Ke Z."/>
            <person name="Kennison J.A."/>
            <person name="Ketchum K.A."/>
            <person name="Kimmel B.E."/>
            <person name="Kodira C.D."/>
            <person name="Kraft C.L."/>
            <person name="Kravitz S."/>
            <person name="Kulp D."/>
            <person name="Lai Z."/>
            <person name="Lasko P."/>
            <person name="Lei Y."/>
            <person name="Levitsky A.A."/>
            <person name="Li J.H."/>
            <person name="Li Z."/>
            <person name="Liang Y."/>
            <person name="Lin X."/>
            <person name="Liu X."/>
            <person name="Mattei B."/>
            <person name="McIntosh T.C."/>
            <person name="McLeod M.P."/>
            <person name="McPherson D."/>
            <person name="Merkulov G."/>
            <person name="Milshina N.V."/>
            <person name="Mobarry C."/>
            <person name="Morris J."/>
            <person name="Moshrefi A."/>
            <person name="Mount S.M."/>
            <person name="Moy M."/>
            <person name="Murphy B."/>
            <person name="Murphy L."/>
            <person name="Muzny D.M."/>
            <person name="Nelson D.L."/>
            <person name="Nelson D.R."/>
            <person name="Nelson K.A."/>
            <person name="Nixon K."/>
            <person name="Nusskern D.R."/>
            <person name="Pacleb J.M."/>
            <person name="Palazzolo M."/>
            <person name="Pittman G.S."/>
            <person name="Pan S."/>
            <person name="Pollard J."/>
            <person name="Puri V."/>
            <person name="Reese M.G."/>
            <person name="Reinert K."/>
            <person name="Remington K."/>
            <person name="Saunders R.D.C."/>
            <person name="Scheeler F."/>
            <person name="Shen H."/>
            <person name="Shue B.C."/>
            <person name="Siden-Kiamos I."/>
            <person name="Simpson M."/>
            <person name="Skupski M.P."/>
            <person name="Smith T.J."/>
            <person name="Spier E."/>
            <person name="Spradling A.C."/>
            <person name="Stapleton M."/>
            <person name="Strong R."/>
            <person name="Sun E."/>
            <person name="Svirskas R."/>
            <person name="Tector C."/>
            <person name="Turner R."/>
            <person name="Venter E."/>
            <person name="Wang A.H."/>
            <person name="Wang X."/>
            <person name="Wang Z.-Y."/>
            <person name="Wassarman D.A."/>
            <person name="Weinstock G.M."/>
            <person name="Weissenbach J."/>
            <person name="Williams S.M."/>
            <person name="Woodage T."/>
            <person name="Worley K.C."/>
            <person name="Wu D."/>
            <person name="Yang S."/>
            <person name="Yao Q.A."/>
            <person name="Ye J."/>
            <person name="Yeh R.-F."/>
            <person name="Zaveri J.S."/>
            <person name="Zhan M."/>
            <person name="Zhang G."/>
            <person name="Zhao Q."/>
            <person name="Zheng L."/>
            <person name="Zheng X.H."/>
            <person name="Zhong F.N."/>
            <person name="Zhong W."/>
            <person name="Zhou X."/>
            <person name="Zhu S.C."/>
            <person name="Zhu X."/>
            <person name="Smith H.O."/>
            <person name="Gibbs R.A."/>
            <person name="Myers E.W."/>
            <person name="Rubin G.M."/>
            <person name="Venter J.C."/>
        </authorList>
    </citation>
    <scope>NUCLEOTIDE SEQUENCE [LARGE SCALE GENOMIC DNA]</scope>
    <source>
        <strain>Berkeley</strain>
    </source>
</reference>
<reference key="2">
    <citation type="journal article" date="2002" name="Genome Biol.">
        <title>Annotation of the Drosophila melanogaster euchromatic genome: a systematic review.</title>
        <authorList>
            <person name="Misra S."/>
            <person name="Crosby M.A."/>
            <person name="Mungall C.J."/>
            <person name="Matthews B.B."/>
            <person name="Campbell K.S."/>
            <person name="Hradecky P."/>
            <person name="Huang Y."/>
            <person name="Kaminker J.S."/>
            <person name="Millburn G.H."/>
            <person name="Prochnik S.E."/>
            <person name="Smith C.D."/>
            <person name="Tupy J.L."/>
            <person name="Whitfield E.J."/>
            <person name="Bayraktaroglu L."/>
            <person name="Berman B.P."/>
            <person name="Bettencourt B.R."/>
            <person name="Celniker S.E."/>
            <person name="de Grey A.D.N.J."/>
            <person name="Drysdale R.A."/>
            <person name="Harris N.L."/>
            <person name="Richter J."/>
            <person name="Russo S."/>
            <person name="Schroeder A.J."/>
            <person name="Shu S.Q."/>
            <person name="Stapleton M."/>
            <person name="Yamada C."/>
            <person name="Ashburner M."/>
            <person name="Gelbart W.M."/>
            <person name="Rubin G.M."/>
            <person name="Lewis S.E."/>
        </authorList>
    </citation>
    <scope>GENOME REANNOTATION</scope>
    <source>
        <strain>Berkeley</strain>
    </source>
</reference>
<reference key="3">
    <citation type="submission" date="2007-12" db="EMBL/GenBank/DDBJ databases">
        <authorList>
            <person name="Stapleton M."/>
            <person name="Carlson J.W."/>
            <person name="Frise E."/>
            <person name="Kapadia B."/>
            <person name="Park S."/>
            <person name="Wan K.H."/>
            <person name="Yu C."/>
            <person name="Celniker S.E."/>
        </authorList>
    </citation>
    <scope>NUCLEOTIDE SEQUENCE [LARGE SCALE MRNA]</scope>
    <source>
        <strain>Berkeley</strain>
        <tissue>Larva</tissue>
        <tissue>Pupae</tissue>
    </source>
</reference>
<reference key="4">
    <citation type="journal article" date="2002" name="Genome Biol.">
        <title>A Drosophila full-length cDNA resource.</title>
        <authorList>
            <person name="Stapleton M."/>
            <person name="Carlson J.W."/>
            <person name="Brokstein P."/>
            <person name="Yu C."/>
            <person name="Champe M."/>
            <person name="George R.A."/>
            <person name="Guarin H."/>
            <person name="Kronmiller B."/>
            <person name="Pacleb J.M."/>
            <person name="Park S."/>
            <person name="Wan K.H."/>
            <person name="Rubin G.M."/>
            <person name="Celniker S.E."/>
        </authorList>
    </citation>
    <scope>NUCLEOTIDE SEQUENCE [LARGE SCALE MRNA] OF 195-570</scope>
    <source>
        <strain>Berkeley</strain>
        <tissue>Embryo</tissue>
    </source>
</reference>
<gene>
    <name evidence="3" type="primary">Cog8</name>
    <name evidence="3" type="ORF">CG6488</name>
</gene>
<evidence type="ECO:0000250" key="1"/>
<evidence type="ECO:0000305" key="2"/>
<evidence type="ECO:0000312" key="3">
    <source>
        <dbReference type="FlyBase" id="FBgn0287204"/>
    </source>
</evidence>
<dbReference type="EMBL" id="AE014134">
    <property type="protein sequence ID" value="AAF53099.1"/>
    <property type="molecule type" value="Genomic_DNA"/>
</dbReference>
<dbReference type="EMBL" id="BT031276">
    <property type="protein sequence ID" value="ABY20517.1"/>
    <property type="molecule type" value="mRNA"/>
</dbReference>
<dbReference type="EMBL" id="AY069825">
    <property type="protein sequence ID" value="AAL39970.1"/>
    <property type="status" value="ALT_SEQ"/>
    <property type="molecule type" value="mRNA"/>
</dbReference>
<dbReference type="RefSeq" id="NP_609503.2">
    <property type="nucleotide sequence ID" value="NM_135659.3"/>
</dbReference>
<dbReference type="SMR" id="Q9VKH0"/>
<dbReference type="BioGRID" id="60628">
    <property type="interactions" value="5"/>
</dbReference>
<dbReference type="ComplexPortal" id="CPX-2794">
    <property type="entry name" value="COG tethering complex"/>
</dbReference>
<dbReference type="DIP" id="DIP-23800N"/>
<dbReference type="FunCoup" id="Q9VKH0">
    <property type="interactions" value="1726"/>
</dbReference>
<dbReference type="IntAct" id="Q9VKH0">
    <property type="interactions" value="6"/>
</dbReference>
<dbReference type="STRING" id="7227.FBpp0079833"/>
<dbReference type="PaxDb" id="7227-FBpp0079833"/>
<dbReference type="DNASU" id="34571"/>
<dbReference type="EnsemblMetazoa" id="FBtr0080248">
    <property type="protein sequence ID" value="FBpp0079833"/>
    <property type="gene ID" value="FBgn0287204"/>
</dbReference>
<dbReference type="GeneID" id="34571"/>
<dbReference type="KEGG" id="dme:Dmel_CG6488"/>
<dbReference type="UCSC" id="CG6488-RA">
    <property type="organism name" value="d. melanogaster"/>
</dbReference>
<dbReference type="AGR" id="FB:FBgn0287204"/>
<dbReference type="CTD" id="84342"/>
<dbReference type="FlyBase" id="FBgn0287204">
    <property type="gene designation" value="Cog8"/>
</dbReference>
<dbReference type="VEuPathDB" id="VectorBase:FBgn0287204"/>
<dbReference type="eggNOG" id="KOG2069">
    <property type="taxonomic scope" value="Eukaryota"/>
</dbReference>
<dbReference type="GeneTree" id="ENSGT00390000015893"/>
<dbReference type="HOGENOM" id="CLU_017968_0_0_1"/>
<dbReference type="InParanoid" id="Q9VKH0"/>
<dbReference type="OMA" id="QRCIHGV"/>
<dbReference type="OrthoDB" id="1661054at2759"/>
<dbReference type="PhylomeDB" id="Q9VKH0"/>
<dbReference type="Reactome" id="R-DME-6807878">
    <property type="pathway name" value="COPI-mediated anterograde transport"/>
</dbReference>
<dbReference type="Reactome" id="R-DME-6811438">
    <property type="pathway name" value="Intra-Golgi traffic"/>
</dbReference>
<dbReference type="Reactome" id="R-DME-6811440">
    <property type="pathway name" value="Retrograde transport at the Trans-Golgi-Network"/>
</dbReference>
<dbReference type="SignaLink" id="Q9VKH0"/>
<dbReference type="BioGRID-ORCS" id="34571">
    <property type="hits" value="0 hits in 1 CRISPR screen"/>
</dbReference>
<dbReference type="GenomeRNAi" id="34571"/>
<dbReference type="PRO" id="PR:Q9VKH0"/>
<dbReference type="Proteomes" id="UP000000803">
    <property type="component" value="Chromosome 2L"/>
</dbReference>
<dbReference type="GO" id="GO:0000139">
    <property type="term" value="C:Golgi membrane"/>
    <property type="evidence" value="ECO:0007669"/>
    <property type="project" value="UniProtKB-SubCell"/>
</dbReference>
<dbReference type="GO" id="GO:0017119">
    <property type="term" value="C:Golgi transport complex"/>
    <property type="evidence" value="ECO:0000314"/>
    <property type="project" value="FlyBase"/>
</dbReference>
<dbReference type="GO" id="GO:0006891">
    <property type="term" value="P:intra-Golgi vesicle-mediated transport"/>
    <property type="evidence" value="ECO:0000250"/>
    <property type="project" value="FlyBase"/>
</dbReference>
<dbReference type="GO" id="GO:0015031">
    <property type="term" value="P:protein transport"/>
    <property type="evidence" value="ECO:0007669"/>
    <property type="project" value="UniProtKB-KW"/>
</dbReference>
<dbReference type="InterPro" id="IPR007255">
    <property type="entry name" value="COG8"/>
</dbReference>
<dbReference type="InterPro" id="IPR016632">
    <property type="entry name" value="COG8_Metazoal_Plant"/>
</dbReference>
<dbReference type="InterPro" id="IPR016159">
    <property type="entry name" value="Cullin_repeat-like_dom_sf"/>
</dbReference>
<dbReference type="PANTHER" id="PTHR21311">
    <property type="entry name" value="CONSERVED OLIGOMERIC GOLGI COMPLEX COMPONENT 8"/>
    <property type="match status" value="1"/>
</dbReference>
<dbReference type="PANTHER" id="PTHR21311:SF0">
    <property type="entry name" value="CONSERVED OLIGOMERIC GOLGI COMPLEX SUBUNIT 8"/>
    <property type="match status" value="1"/>
</dbReference>
<dbReference type="Pfam" id="PF04124">
    <property type="entry name" value="Dor1"/>
    <property type="match status" value="1"/>
</dbReference>
<dbReference type="PIRSF" id="PIRSF015415">
    <property type="entry name" value="COG8"/>
    <property type="match status" value="1"/>
</dbReference>
<dbReference type="SUPFAM" id="SSF74788">
    <property type="entry name" value="Cullin repeat-like"/>
    <property type="match status" value="1"/>
</dbReference>
<accession>Q9VKH0</accession>
<accession>A9UNB2</accession>
<accession>Q8T9C7</accession>
<keyword id="KW-0333">Golgi apparatus</keyword>
<keyword id="KW-0472">Membrane</keyword>
<keyword id="KW-0653">Protein transport</keyword>
<keyword id="KW-1185">Reference proteome</keyword>
<keyword id="KW-0813">Transport</keyword>
<feature type="chain" id="PRO_0000213524" description="Conserved oligomeric Golgi complex subunit 8">
    <location>
        <begin position="1"/>
        <end position="570"/>
    </location>
</feature>
<feature type="sequence conflict" description="In Ref. 4; AAL39970." evidence="2" ref="4">
    <original>S</original>
    <variation>N</variation>
    <location>
        <position position="372"/>
    </location>
</feature>
<proteinExistence type="evidence at transcript level"/>
<protein>
    <recommendedName>
        <fullName>Conserved oligomeric Golgi complex subunit 8</fullName>
        <shortName>COG complex subunit 8</shortName>
    </recommendedName>
    <alternativeName>
        <fullName evidence="3">Component of oligomeric Golgi complex 8</fullName>
    </alternativeName>
</protein>
<sequence>MDFPDKMDLENERVLKLIFPDGVPDNLRGNPELDNYLAKLGTCKVEQLKKEQTRLAEEARTILEQTQDLAISNYRTFITTAENSRSIFSEFLRSEQQLDTLVSKLPDLSVQCERFLQDSAELNEQRRLNSITLQKNAQLLEVLELPQLMERCIREGRYEEALELAAYATRLGQHQGHIPVVTSIVRSVEALWHNMLVQLVAQLRTDLQLPKCLQIVGYLRRMQAFGDNELRLKFLQARDAWLTSCLEAIPTADAQQHLSKTIEITRINLFNIITQYRAIFPEDEGTLKTQSSLRPLQGVSCNGDRLFQAWLHNKISDFLQTLERDLQLGVGSVETVLGQCMYFGLSFSRVGADFRALMAPIFVGVIRRRFESSVEQVDEQFERELERFTLINKVALHSHARKQVDPEQESYAPPEALLDFYPLAALCNGYLSALNELRLCAPLALATDVTRCLQHSLQQAAQRVLAFYRQEQQAFAGSEREAFVRLCSCLAYDLVPYIQRCIHGVFPPQSLTVHLGISLLQLEQQQLTYLQQTRILEPLKHLLPTKALVQPQDKVMEAKPSAGVPVTAEG</sequence>